<gene>
    <name evidence="1" type="primary">M</name>
    <name type="ORF">5</name>
</gene>
<keyword id="KW-0325">Glycoprotein</keyword>
<keyword id="KW-1040">Host Golgi apparatus</keyword>
<keyword id="KW-1043">Host membrane</keyword>
<keyword id="KW-0945">Host-virus interaction</keyword>
<keyword id="KW-0472">Membrane</keyword>
<keyword id="KW-0812">Transmembrane</keyword>
<keyword id="KW-1133">Transmembrane helix</keyword>
<keyword id="KW-0261">Viral envelope protein</keyword>
<keyword id="KW-0899">Viral immunoevasion</keyword>
<keyword id="KW-0468">Viral matrix protein</keyword>
<keyword id="KW-0946">Virion</keyword>
<feature type="chain" id="PRO_0000291372" description="Membrane protein">
    <location>
        <begin position="1"/>
        <end position="221"/>
    </location>
</feature>
<feature type="topological domain" description="Virion surface" evidence="1">
    <location>
        <begin position="1"/>
        <end position="18"/>
    </location>
</feature>
<feature type="transmembrane region" description="Helical" evidence="1">
    <location>
        <begin position="19"/>
        <end position="39"/>
    </location>
</feature>
<feature type="topological domain" description="Intravirion" evidence="1">
    <location>
        <begin position="40"/>
        <end position="49"/>
    </location>
</feature>
<feature type="transmembrane region" description="Helical" evidence="1">
    <location>
        <begin position="50"/>
        <end position="70"/>
    </location>
</feature>
<feature type="topological domain" description="Virion surface" evidence="1">
    <location>
        <begin position="71"/>
        <end position="78"/>
    </location>
</feature>
<feature type="transmembrane region" description="Helical" evidence="1">
    <location>
        <begin position="79"/>
        <end position="99"/>
    </location>
</feature>
<feature type="topological domain" description="Intravirion" evidence="1">
    <location>
        <begin position="100"/>
        <end position="221"/>
    </location>
</feature>
<accession>Q3LZX9</accession>
<dbReference type="EMBL" id="DQ022305">
    <property type="protein sequence ID" value="AAY88869.1"/>
    <property type="molecule type" value="Genomic_RNA"/>
</dbReference>
<dbReference type="SMR" id="Q3LZX9"/>
<dbReference type="Proteomes" id="UP000007450">
    <property type="component" value="Segment"/>
</dbReference>
<dbReference type="GO" id="GO:0044178">
    <property type="term" value="C:host cell Golgi membrane"/>
    <property type="evidence" value="ECO:0007669"/>
    <property type="project" value="UniProtKB-SubCell"/>
</dbReference>
<dbReference type="GO" id="GO:0016020">
    <property type="term" value="C:membrane"/>
    <property type="evidence" value="ECO:0007669"/>
    <property type="project" value="UniProtKB-UniRule"/>
</dbReference>
<dbReference type="GO" id="GO:0019031">
    <property type="term" value="C:viral envelope"/>
    <property type="evidence" value="ECO:0007669"/>
    <property type="project" value="UniProtKB-UniRule"/>
</dbReference>
<dbReference type="GO" id="GO:0055036">
    <property type="term" value="C:virion membrane"/>
    <property type="evidence" value="ECO:0007669"/>
    <property type="project" value="UniProtKB-SubCell"/>
</dbReference>
<dbReference type="GO" id="GO:0039660">
    <property type="term" value="F:structural constituent of virion"/>
    <property type="evidence" value="ECO:0007669"/>
    <property type="project" value="UniProtKB-UniRule"/>
</dbReference>
<dbReference type="CDD" id="cd21569">
    <property type="entry name" value="SARS-like-CoV_M"/>
    <property type="match status" value="1"/>
</dbReference>
<dbReference type="HAMAP" id="MF_04202">
    <property type="entry name" value="BETA_CORONA_M"/>
    <property type="match status" value="1"/>
</dbReference>
<dbReference type="InterPro" id="IPR002574">
    <property type="entry name" value="M_CoV"/>
</dbReference>
<dbReference type="InterPro" id="IPR044361">
    <property type="entry name" value="M_SARS-like-CoV"/>
</dbReference>
<dbReference type="Pfam" id="PF01635">
    <property type="entry name" value="CoV_M"/>
    <property type="match status" value="1"/>
</dbReference>
<dbReference type="PROSITE" id="PS51927">
    <property type="entry name" value="COV_M"/>
    <property type="match status" value="1"/>
</dbReference>
<organism>
    <name type="scientific">Bat coronavirus HKU3</name>
    <name type="common">BtCoV</name>
    <name type="synonym">SARS-like coronavirus HKU3</name>
    <dbReference type="NCBI Taxonomy" id="442736"/>
    <lineage>
        <taxon>Viruses</taxon>
        <taxon>Riboviria</taxon>
        <taxon>Orthornavirae</taxon>
        <taxon>Pisuviricota</taxon>
        <taxon>Pisoniviricetes</taxon>
        <taxon>Nidovirales</taxon>
        <taxon>Cornidovirineae</taxon>
        <taxon>Coronaviridae</taxon>
        <taxon>Orthocoronavirinae</taxon>
        <taxon>Betacoronavirus</taxon>
        <taxon>Sarbecovirus</taxon>
        <taxon>Severe acute respiratory syndrome coronavirus</taxon>
    </lineage>
</organism>
<protein>
    <recommendedName>
        <fullName evidence="1">Membrane protein</fullName>
        <shortName evidence="1">M protein</shortName>
    </recommendedName>
    <alternativeName>
        <fullName evidence="1">E1 glycoprotein</fullName>
    </alternativeName>
    <alternativeName>
        <fullName evidence="1">Matrix glycoprotein</fullName>
    </alternativeName>
    <alternativeName>
        <fullName evidence="1">Membrane glycoprotein</fullName>
    </alternativeName>
</protein>
<comment type="function">
    <text evidence="1 2">Component of the viral envelope that plays a central role in virus morphogenesis and assembly via its interactions with other viral proteins.</text>
</comment>
<comment type="subunit">
    <text evidence="1 2">Homomultimer. Interacts with envelope E protein in the budding compartment of the host cell, which is located between endoplasmic reticulum and the Golgi complex. Forms a complex with HE and S proteins. Interacts with nucleocapsid N protein. This interaction probably participates in RNA packaging into the virus.</text>
</comment>
<comment type="subcellular location">
    <subcellularLocation>
        <location evidence="1">Virion membrane</location>
        <topology evidence="1">Multi-pass membrane protein</topology>
    </subcellularLocation>
    <subcellularLocation>
        <location evidence="1">Host Golgi apparatus membrane</location>
        <topology evidence="1">Multi-pass membrane protein</topology>
    </subcellularLocation>
    <text evidence="1">Largely embedded in the lipid bilayer.</text>
</comment>
<comment type="miscellaneous">
    <text>Bat coronavirus HKU3 is highly similar to SARS-CoV (SARS-like).</text>
</comment>
<comment type="similarity">
    <text evidence="1">Belongs to the betacoronaviruses M protein family.</text>
</comment>
<sequence length="221" mass="25091">MADNGTITVEELKQLLEQWNLVIGFIFLAWIMLLQFAYSNRNRFLYIIKLVFLWLLWPVTLACFVLAAVYRINWVTGGIAIAMACIVGLMWLSYFVASFRLFARTRSMWSFNPETNILLNVPLRGTILTRPLMESELVIGAVIIRGHLRMAGHSLGRCDIKDLPKEITVATSRTLSYYKLGASQRVGTDSGFAAYNRYRIGNYKLNTDHSGSNDNIALLVQ</sequence>
<name>VME1_BCHK3</name>
<proteinExistence type="inferred from homology"/>
<organismHost>
    <name type="scientific">Rhinolophus sinicus</name>
    <name type="common">Chinese rufous horseshoe bat</name>
    <dbReference type="NCBI Taxonomy" id="89399"/>
</organismHost>
<evidence type="ECO:0000255" key="1">
    <source>
        <dbReference type="HAMAP-Rule" id="MF_04202"/>
    </source>
</evidence>
<evidence type="ECO:0000255" key="2">
    <source>
        <dbReference type="PROSITE-ProRule" id="PRU01275"/>
    </source>
</evidence>
<reference key="1">
    <citation type="journal article" date="2005" name="Proc. Natl. Acad. Sci. U.S.A.">
        <title>Severe acute respiratory syndrome coronavirus-like virus in Chinese horseshoe bats.</title>
        <authorList>
            <person name="Lau S.K.P."/>
            <person name="Woo P.C.Y."/>
            <person name="Li K.S.M."/>
            <person name="Huang Y."/>
            <person name="Tsoi H.-W."/>
            <person name="Wong B.H.L."/>
            <person name="Wong S.S.Y."/>
            <person name="Leung S.-Y."/>
            <person name="Chan K.-H."/>
            <person name="Yuen K.-Y."/>
        </authorList>
    </citation>
    <scope>NUCLEOTIDE SEQUENCE [GENOMIC RNA]</scope>
    <source>
        <strain>Isolate HKU3-1</strain>
    </source>
</reference>